<accession>Q6SKG1</accession>
<accession>Q62742</accession>
<dbReference type="EC" id="6.2.1.2" evidence="3"/>
<dbReference type="EC" id="6.2.1.17" evidence="3"/>
<dbReference type="EMBL" id="AY455861">
    <property type="protein sequence ID" value="AAR20710.1"/>
    <property type="molecule type" value="Genomic_DNA"/>
</dbReference>
<dbReference type="EMBL" id="AY456695">
    <property type="protein sequence ID" value="AAR21570.1"/>
    <property type="molecule type" value="Genomic_DNA"/>
</dbReference>
<dbReference type="EMBL" id="BC090325">
    <property type="protein sequence ID" value="AAH90325.1"/>
    <property type="molecule type" value="mRNA"/>
</dbReference>
<dbReference type="EMBL" id="U19832">
    <property type="protein sequence ID" value="AAA95995.1"/>
    <property type="molecule type" value="Genomic_DNA"/>
</dbReference>
<dbReference type="RefSeq" id="NP_150234.1">
    <property type="nucleotide sequence ID" value="NM_033231.1"/>
</dbReference>
<dbReference type="SMR" id="Q6SKG1"/>
<dbReference type="FunCoup" id="Q6SKG1">
    <property type="interactions" value="37"/>
</dbReference>
<dbReference type="STRING" id="10116.ENSRNOP00000020039"/>
<dbReference type="iPTMnet" id="Q6SKG1"/>
<dbReference type="PhosphoSitePlus" id="Q6SKG1"/>
<dbReference type="PaxDb" id="10116-ENSRNOP00000020039"/>
<dbReference type="Ensembl" id="ENSRNOT00000020039.7">
    <property type="protein sequence ID" value="ENSRNOP00000020039.6"/>
    <property type="gene ID" value="ENSRNOG00000032246.5"/>
</dbReference>
<dbReference type="GeneID" id="24763"/>
<dbReference type="KEGG" id="rno:24763"/>
<dbReference type="UCSC" id="RGD:62086">
    <property type="organism name" value="rat"/>
</dbReference>
<dbReference type="AGR" id="RGD:62086"/>
<dbReference type="CTD" id="6296"/>
<dbReference type="RGD" id="62086">
    <property type="gene designation" value="Acsm3"/>
</dbReference>
<dbReference type="eggNOG" id="KOG1175">
    <property type="taxonomic scope" value="Eukaryota"/>
</dbReference>
<dbReference type="GeneTree" id="ENSGT00940000157930"/>
<dbReference type="HOGENOM" id="CLU_000022_59_10_1"/>
<dbReference type="InParanoid" id="Q6SKG1"/>
<dbReference type="PRO" id="PR:Q6SKG1"/>
<dbReference type="Proteomes" id="UP000002494">
    <property type="component" value="Chromosome 1"/>
</dbReference>
<dbReference type="Bgee" id="ENSRNOG00000032246">
    <property type="expression patterns" value="Expressed in kidney and 18 other cell types or tissues"/>
</dbReference>
<dbReference type="GO" id="GO:0005759">
    <property type="term" value="C:mitochondrial matrix"/>
    <property type="evidence" value="ECO:0000266"/>
    <property type="project" value="RGD"/>
</dbReference>
<dbReference type="GO" id="GO:0005739">
    <property type="term" value="C:mitochondrion"/>
    <property type="evidence" value="ECO:0000250"/>
    <property type="project" value="UniProtKB"/>
</dbReference>
<dbReference type="GO" id="GO:0043759">
    <property type="term" value="F:2-methylbutanoate-CoA ligase activity"/>
    <property type="evidence" value="ECO:0007669"/>
    <property type="project" value="RHEA"/>
</dbReference>
<dbReference type="GO" id="GO:0005524">
    <property type="term" value="F:ATP binding"/>
    <property type="evidence" value="ECO:0007669"/>
    <property type="project" value="UniProtKB-KW"/>
</dbReference>
<dbReference type="GO" id="GO:0015645">
    <property type="term" value="F:fatty acid ligase activity"/>
    <property type="evidence" value="ECO:0000266"/>
    <property type="project" value="RGD"/>
</dbReference>
<dbReference type="GO" id="GO:0004321">
    <property type="term" value="F:fatty-acyl-CoA synthase activity"/>
    <property type="evidence" value="ECO:0000318"/>
    <property type="project" value="GO_Central"/>
</dbReference>
<dbReference type="GO" id="GO:0031956">
    <property type="term" value="F:medium-chain fatty acid-CoA ligase activity"/>
    <property type="evidence" value="ECO:0000250"/>
    <property type="project" value="UniProtKB"/>
</dbReference>
<dbReference type="GO" id="GO:0046872">
    <property type="term" value="F:metal ion binding"/>
    <property type="evidence" value="ECO:0007669"/>
    <property type="project" value="UniProtKB-KW"/>
</dbReference>
<dbReference type="GO" id="GO:0018729">
    <property type="term" value="F:propionate CoA-transferase activity"/>
    <property type="evidence" value="ECO:0000266"/>
    <property type="project" value="RGD"/>
</dbReference>
<dbReference type="GO" id="GO:0050218">
    <property type="term" value="F:propionate-CoA ligase activity"/>
    <property type="evidence" value="ECO:0007669"/>
    <property type="project" value="UniProtKB-EC"/>
</dbReference>
<dbReference type="GO" id="GO:0006637">
    <property type="term" value="P:acyl-CoA metabolic process"/>
    <property type="evidence" value="ECO:0000318"/>
    <property type="project" value="GO_Central"/>
</dbReference>
<dbReference type="GO" id="GO:0006633">
    <property type="term" value="P:fatty acid biosynthetic process"/>
    <property type="evidence" value="ECO:0000266"/>
    <property type="project" value="RGD"/>
</dbReference>
<dbReference type="CDD" id="cd05928">
    <property type="entry name" value="MACS_euk"/>
    <property type="match status" value="1"/>
</dbReference>
<dbReference type="FunFam" id="3.40.50.12780:FF:000007">
    <property type="entry name" value="Acyl-coenzyme A synthetase ACSM2A, mitochondrial"/>
    <property type="match status" value="1"/>
</dbReference>
<dbReference type="FunFam" id="3.30.300.30:FF:000005">
    <property type="entry name" value="Acyl-coenzyme A synthetase ACSM5, mitochondrial"/>
    <property type="match status" value="1"/>
</dbReference>
<dbReference type="Gene3D" id="3.30.300.30">
    <property type="match status" value="1"/>
</dbReference>
<dbReference type="Gene3D" id="3.40.50.12780">
    <property type="entry name" value="N-terminal domain of ligase-like"/>
    <property type="match status" value="1"/>
</dbReference>
<dbReference type="InterPro" id="IPR025110">
    <property type="entry name" value="AMP-bd_C"/>
</dbReference>
<dbReference type="InterPro" id="IPR045851">
    <property type="entry name" value="AMP-bd_C_sf"/>
</dbReference>
<dbReference type="InterPro" id="IPR020845">
    <property type="entry name" value="AMP-binding_CS"/>
</dbReference>
<dbReference type="InterPro" id="IPR000873">
    <property type="entry name" value="AMP-dep_synth/lig_dom"/>
</dbReference>
<dbReference type="InterPro" id="IPR042099">
    <property type="entry name" value="ANL_N_sf"/>
</dbReference>
<dbReference type="InterPro" id="IPR051087">
    <property type="entry name" value="Mitochondrial_ACSM"/>
</dbReference>
<dbReference type="PANTHER" id="PTHR43605">
    <property type="entry name" value="ACYL-COENZYME A SYNTHETASE"/>
    <property type="match status" value="1"/>
</dbReference>
<dbReference type="PANTHER" id="PTHR43605:SF7">
    <property type="entry name" value="ACYL-COENZYME A SYNTHETASE ACSM3, MITOCHONDRIAL"/>
    <property type="match status" value="1"/>
</dbReference>
<dbReference type="Pfam" id="PF00501">
    <property type="entry name" value="AMP-binding"/>
    <property type="match status" value="1"/>
</dbReference>
<dbReference type="Pfam" id="PF13193">
    <property type="entry name" value="AMP-binding_C"/>
    <property type="match status" value="1"/>
</dbReference>
<dbReference type="SUPFAM" id="SSF56801">
    <property type="entry name" value="Acetyl-CoA synthetase-like"/>
    <property type="match status" value="1"/>
</dbReference>
<dbReference type="PROSITE" id="PS00455">
    <property type="entry name" value="AMP_BINDING"/>
    <property type="match status" value="1"/>
</dbReference>
<name>ACSM3_RAT</name>
<reference key="1">
    <citation type="journal article" date="2004" name="Nucleic Acids Res.">
        <title>Exon repetition: a major pathway for processing mRNA of some genes is allele-specific.</title>
        <authorList>
            <person name="Rigatti R."/>
            <person name="Jia J.-H."/>
            <person name="Samani N.J."/>
            <person name="Eperon I.C."/>
        </authorList>
    </citation>
    <scope>NUCLEOTIDE SEQUENCE [GENOMIC DNA]</scope>
    <source>
        <strain>SHR</strain>
        <strain>Wistar Kyoto</strain>
    </source>
</reference>
<reference key="2">
    <citation type="journal article" date="2004" name="Genome Res.">
        <title>The status, quality, and expansion of the NIH full-length cDNA project: the Mammalian Gene Collection (MGC).</title>
        <authorList>
            <consortium name="The MGC Project Team"/>
        </authorList>
    </citation>
    <scope>NUCLEOTIDE SEQUENCE [LARGE SCALE MRNA]</scope>
    <source>
        <tissue>Kidney</tissue>
    </source>
</reference>
<reference key="3">
    <citation type="journal article" date="1995" name="Mamm. Genome">
        <title>Possible alternative splicing of the rat SA gene.</title>
        <authorList>
            <person name="Gu L."/>
            <person name="Dene H."/>
            <person name="Rapp J.P."/>
        </authorList>
    </citation>
    <scope>NUCLEOTIDE SEQUENCE [GENOMIC DNA] OF 374-479</scope>
</reference>
<keyword id="KW-0007">Acetylation</keyword>
<keyword id="KW-0067">ATP-binding</keyword>
<keyword id="KW-0276">Fatty acid metabolism</keyword>
<keyword id="KW-0436">Ligase</keyword>
<keyword id="KW-0443">Lipid metabolism</keyword>
<keyword id="KW-0460">Magnesium</keyword>
<keyword id="KW-0479">Metal-binding</keyword>
<keyword id="KW-0496">Mitochondrion</keyword>
<keyword id="KW-0547">Nucleotide-binding</keyword>
<keyword id="KW-1185">Reference proteome</keyword>
<keyword id="KW-0809">Transit peptide</keyword>
<feature type="transit peptide" description="Mitochondrion" evidence="5">
    <location>
        <begin position="1"/>
        <end position="21"/>
    </location>
</feature>
<feature type="chain" id="PRO_0000306100" description="Acyl-coenzyme A synthetase ACSM3, mitochondrial">
    <location>
        <begin position="22"/>
        <end position="580"/>
    </location>
</feature>
<feature type="binding site" evidence="1">
    <location>
        <begin position="229"/>
        <end position="237"/>
    </location>
    <ligand>
        <name>ATP</name>
        <dbReference type="ChEBI" id="CHEBI:30616"/>
    </ligand>
</feature>
<feature type="binding site" evidence="1">
    <location>
        <begin position="368"/>
        <end position="373"/>
    </location>
    <ligand>
        <name>ATP</name>
        <dbReference type="ChEBI" id="CHEBI:30616"/>
    </ligand>
</feature>
<feature type="binding site" evidence="1">
    <location>
        <position position="455"/>
    </location>
    <ligand>
        <name>ATP</name>
        <dbReference type="ChEBI" id="CHEBI:30616"/>
    </ligand>
</feature>
<feature type="binding site" evidence="1">
    <location>
        <position position="470"/>
    </location>
    <ligand>
        <name>ATP</name>
        <dbReference type="ChEBI" id="CHEBI:30616"/>
    </ligand>
</feature>
<feature type="binding site" evidence="1">
    <location>
        <position position="566"/>
    </location>
    <ligand>
        <name>ATP</name>
        <dbReference type="ChEBI" id="CHEBI:30616"/>
    </ligand>
</feature>
<feature type="modified residue" description="N6-succinyllysine" evidence="3">
    <location>
        <position position="67"/>
    </location>
</feature>
<feature type="modified residue" description="N6-succinyllysine" evidence="3">
    <location>
        <position position="100"/>
    </location>
</feature>
<feature type="modified residue" description="N6-acetyllysine" evidence="3">
    <location>
        <position position="151"/>
    </location>
</feature>
<proteinExistence type="evidence at transcript level"/>
<sequence>MAMLLRARCFHRLAIPDPRRILYKDYRTAIPQNFSNYESMKHDFKIEIPEYFNFAKDVLDQWTNTEKTGKRLSNPAFWWVDGNGKEVRWSFEELGSLSRKFANILTEACSLQRGDRVMVILPKIPEWWLANVACLRTGTVLIPGTTQLTQKDILYRLQSSKSKCIITDDTLAPAVDIVAAKCENLHSKLIVSQHSREGWGNLKEMMKYASDSHTCVDTKHNELMAIYFTSGTTGPPKMIGHTHSSFGLGLSVNGRFWLDLIASDVMWNTSDTGWAKSAWSSVFSPWTQGACVFAHYLPRFDSTSILQTLSKFPITVFCSAPTAYRMLIQNDITSYKFNSLKHCVSAGEPINPEVMEQWKKKTGLDIYEGYGQTETVLICGNFKGMKIKPGSMGKPSPAFNVEILDENGTILPPGQEGDIAVQVLPDRPFGLFTHYVDNPSKTASTLRGNFYITGDRGYMDEDGYFWFVARSDDVILSSGYRIGPFEVESALIEHPSIAESAVVSSPDPIRGEVVKAFIVLNPDYKLHDQEQLKKEIQEHVKKTTAPYKYPRKIEFIEELPKTVSGKVKRNELRRKEWTTT</sequence>
<comment type="function">
    <text evidence="3">Catalyzes the activation of fatty acids by CoA to produce an acyl-CoA, the first step in fatty acid metabolism (By similarity). Capable of activating medium-chain fatty acids with a preference for isobutyrate among fatty acids with 2-6 carbon atoms (By similarity).</text>
</comment>
<comment type="catalytic activity">
    <reaction evidence="3">
        <text>a medium-chain fatty acid + ATP + CoA = a medium-chain fatty acyl-CoA + AMP + diphosphate</text>
        <dbReference type="Rhea" id="RHEA:48340"/>
        <dbReference type="ChEBI" id="CHEBI:30616"/>
        <dbReference type="ChEBI" id="CHEBI:33019"/>
        <dbReference type="ChEBI" id="CHEBI:57287"/>
        <dbReference type="ChEBI" id="CHEBI:59558"/>
        <dbReference type="ChEBI" id="CHEBI:90546"/>
        <dbReference type="ChEBI" id="CHEBI:456215"/>
        <dbReference type="EC" id="6.2.1.2"/>
    </reaction>
    <physiologicalReaction direction="left-to-right" evidence="3">
        <dbReference type="Rhea" id="RHEA:48341"/>
    </physiologicalReaction>
</comment>
<comment type="catalytic activity">
    <reaction evidence="3">
        <text>propanoate + ATP + CoA = propanoyl-CoA + AMP + diphosphate</text>
        <dbReference type="Rhea" id="RHEA:20373"/>
        <dbReference type="ChEBI" id="CHEBI:17272"/>
        <dbReference type="ChEBI" id="CHEBI:30616"/>
        <dbReference type="ChEBI" id="CHEBI:33019"/>
        <dbReference type="ChEBI" id="CHEBI:57287"/>
        <dbReference type="ChEBI" id="CHEBI:57392"/>
        <dbReference type="ChEBI" id="CHEBI:456215"/>
        <dbReference type="EC" id="6.2.1.17"/>
    </reaction>
    <physiologicalReaction direction="left-to-right" evidence="3">
        <dbReference type="Rhea" id="RHEA:20374"/>
    </physiologicalReaction>
</comment>
<comment type="catalytic activity">
    <reaction evidence="3">
        <text>butanoate + ATP + CoA = butanoyl-CoA + AMP + diphosphate</text>
        <dbReference type="Rhea" id="RHEA:46172"/>
        <dbReference type="ChEBI" id="CHEBI:17968"/>
        <dbReference type="ChEBI" id="CHEBI:30616"/>
        <dbReference type="ChEBI" id="CHEBI:33019"/>
        <dbReference type="ChEBI" id="CHEBI:57287"/>
        <dbReference type="ChEBI" id="CHEBI:57371"/>
        <dbReference type="ChEBI" id="CHEBI:456215"/>
    </reaction>
    <physiologicalReaction direction="left-to-right" evidence="3">
        <dbReference type="Rhea" id="RHEA:46173"/>
    </physiologicalReaction>
</comment>
<comment type="catalytic activity">
    <reaction evidence="3">
        <text>2-methylpropanoate + ATP + CoA = 2-methylpropanoyl-CoA + AMP + diphosphate</text>
        <dbReference type="Rhea" id="RHEA:46176"/>
        <dbReference type="ChEBI" id="CHEBI:30616"/>
        <dbReference type="ChEBI" id="CHEBI:33019"/>
        <dbReference type="ChEBI" id="CHEBI:48944"/>
        <dbReference type="ChEBI" id="CHEBI:57287"/>
        <dbReference type="ChEBI" id="CHEBI:57338"/>
        <dbReference type="ChEBI" id="CHEBI:456215"/>
    </reaction>
    <physiologicalReaction direction="left-to-right" evidence="3">
        <dbReference type="Rhea" id="RHEA:46177"/>
    </physiologicalReaction>
</comment>
<comment type="catalytic activity">
    <reaction evidence="3">
        <text>2-methylbutanoate + ATP + CoA = 2-methylbutanoyl-CoA + AMP + diphosphate</text>
        <dbReference type="Rhea" id="RHEA:46180"/>
        <dbReference type="ChEBI" id="CHEBI:30616"/>
        <dbReference type="ChEBI" id="CHEBI:33019"/>
        <dbReference type="ChEBI" id="CHEBI:48946"/>
        <dbReference type="ChEBI" id="CHEBI:57287"/>
        <dbReference type="ChEBI" id="CHEBI:57336"/>
        <dbReference type="ChEBI" id="CHEBI:456215"/>
    </reaction>
    <physiologicalReaction direction="left-to-right" evidence="3">
        <dbReference type="Rhea" id="RHEA:46181"/>
    </physiologicalReaction>
</comment>
<comment type="catalytic activity">
    <reaction evidence="4">
        <text>octanoate + ATP + CoA = octanoyl-CoA + AMP + diphosphate</text>
        <dbReference type="Rhea" id="RHEA:33631"/>
        <dbReference type="ChEBI" id="CHEBI:25646"/>
        <dbReference type="ChEBI" id="CHEBI:30616"/>
        <dbReference type="ChEBI" id="CHEBI:33019"/>
        <dbReference type="ChEBI" id="CHEBI:57287"/>
        <dbReference type="ChEBI" id="CHEBI:57386"/>
        <dbReference type="ChEBI" id="CHEBI:456215"/>
    </reaction>
    <physiologicalReaction direction="left-to-right" evidence="4">
        <dbReference type="Rhea" id="RHEA:33632"/>
    </physiologicalReaction>
</comment>
<comment type="cofactor">
    <cofactor evidence="2">
        <name>Mg(2+)</name>
        <dbReference type="ChEBI" id="CHEBI:18420"/>
    </cofactor>
    <cofactor evidence="2">
        <name>Mn(2+)</name>
        <dbReference type="ChEBI" id="CHEBI:29035"/>
    </cofactor>
</comment>
<comment type="subcellular location">
    <subcellularLocation>
        <location evidence="4">Mitochondrion</location>
    </subcellularLocation>
    <subcellularLocation>
        <location evidence="3">Mitochondrion matrix</location>
    </subcellularLocation>
</comment>
<comment type="similarity">
    <text evidence="6">Belongs to the ATP-dependent AMP-binding enzyme family.</text>
</comment>
<evidence type="ECO:0000250" key="1"/>
<evidence type="ECO:0000250" key="2">
    <source>
        <dbReference type="UniProtKB" id="Q08AH1"/>
    </source>
</evidence>
<evidence type="ECO:0000250" key="3">
    <source>
        <dbReference type="UniProtKB" id="Q3UNX5"/>
    </source>
</evidence>
<evidence type="ECO:0000250" key="4">
    <source>
        <dbReference type="UniProtKB" id="Q53FZ2"/>
    </source>
</evidence>
<evidence type="ECO:0000255" key="5"/>
<evidence type="ECO:0000305" key="6"/>
<organism>
    <name type="scientific">Rattus norvegicus</name>
    <name type="common">Rat</name>
    <dbReference type="NCBI Taxonomy" id="10116"/>
    <lineage>
        <taxon>Eukaryota</taxon>
        <taxon>Metazoa</taxon>
        <taxon>Chordata</taxon>
        <taxon>Craniata</taxon>
        <taxon>Vertebrata</taxon>
        <taxon>Euteleostomi</taxon>
        <taxon>Mammalia</taxon>
        <taxon>Eutheria</taxon>
        <taxon>Euarchontoglires</taxon>
        <taxon>Glires</taxon>
        <taxon>Rodentia</taxon>
        <taxon>Myomorpha</taxon>
        <taxon>Muroidea</taxon>
        <taxon>Muridae</taxon>
        <taxon>Murinae</taxon>
        <taxon>Rattus</taxon>
    </lineage>
</organism>
<gene>
    <name type="primary">Acsm3</name>
    <name type="synonym">Sah</name>
</gene>
<protein>
    <recommendedName>
        <fullName>Acyl-coenzyme A synthetase ACSM3, mitochondrial</fullName>
        <ecNumber evidence="3">6.2.1.2</ecNumber>
    </recommendedName>
    <alternativeName>
        <fullName>Acyl-CoA synthetase medium-chain family member 3</fullName>
    </alternativeName>
    <alternativeName>
        <fullName>Butyrate--CoA ligase 3</fullName>
    </alternativeName>
    <alternativeName>
        <fullName>Butyryl-coenzyme A synthetase 3</fullName>
    </alternativeName>
    <alternativeName>
        <fullName>Middle-chain acyl-CoA synthetase 3</fullName>
    </alternativeName>
    <alternativeName>
        <fullName>Propionate--CoA ligase</fullName>
        <ecNumber evidence="3">6.2.1.17</ecNumber>
    </alternativeName>
    <alternativeName>
        <fullName>SA rat hypertension-associated protein</fullName>
        <shortName>Protein SA</shortName>
    </alternativeName>
</protein>